<feature type="chain" id="PRO_0000223081" description="Uncharacterized protein ECU01_0040">
    <location>
        <begin position="1"/>
        <end position="204"/>
    </location>
</feature>
<feature type="region of interest" description="Disordered" evidence="1">
    <location>
        <begin position="118"/>
        <end position="169"/>
    </location>
</feature>
<organism>
    <name type="scientific">Encephalitozoon cuniculi (strain GB-M1)</name>
    <name type="common">Microsporidian parasite</name>
    <dbReference type="NCBI Taxonomy" id="284813"/>
    <lineage>
        <taxon>Eukaryota</taxon>
        <taxon>Fungi</taxon>
        <taxon>Fungi incertae sedis</taxon>
        <taxon>Microsporidia</taxon>
        <taxon>Unikaryonidae</taxon>
        <taxon>Encephalitozoon</taxon>
    </lineage>
</organism>
<reference key="1">
    <citation type="journal article" date="2001" name="Genome Res.">
        <title>Sequence and analysis of chromosome I of the amitochondriate intracellular parasite Encephalitozoon cuniculi (Microspora).</title>
        <authorList>
            <person name="Peyret P."/>
            <person name="Katinka M.D."/>
            <person name="Duprat S."/>
            <person name="Duffieux F."/>
            <person name="Barbe V."/>
            <person name="Barbazanges M."/>
            <person name="Weissenbach J."/>
            <person name="Saurin W."/>
            <person name="Vivares C.P."/>
        </authorList>
    </citation>
    <scope>NUCLEOTIDE SEQUENCE [LARGE SCALE GENOMIC DNA]</scope>
    <source>
        <strain>GB-M1</strain>
    </source>
</reference>
<reference key="2">
    <citation type="journal article" date="2001" name="Nature">
        <title>Genome sequence and gene compaction of the eukaryote parasite Encephalitozoon cuniculi.</title>
        <authorList>
            <person name="Katinka M.D."/>
            <person name="Duprat S."/>
            <person name="Cornillot E."/>
            <person name="Metenier G."/>
            <person name="Thomarat F."/>
            <person name="Prensier G."/>
            <person name="Barbe V."/>
            <person name="Peyretaillade E."/>
            <person name="Brottier P."/>
            <person name="Wincker P."/>
            <person name="Delbac F."/>
            <person name="El Alaoui H."/>
            <person name="Peyret P."/>
            <person name="Saurin W."/>
            <person name="Gouy M."/>
            <person name="Weissenbach J."/>
            <person name="Vivares C.P."/>
        </authorList>
    </citation>
    <scope>NUCLEOTIDE SEQUENCE [LARGE SCALE GENOMIC DNA]</scope>
    <source>
        <strain>GB-M1</strain>
    </source>
</reference>
<gene>
    <name type="ordered locus">ECU01_0040</name>
</gene>
<gene>
    <name type="ordered locus">ECU01_1570</name>
</gene>
<gene>
    <name type="ordered locus">ECU04_0050</name>
</gene>
<gene>
    <name type="ordered locus">ECU05_0020</name>
</gene>
<gene>
    <name type="ordered locus">ECU08_2130</name>
</gene>
<gene>
    <name type="ordered locus">ECU10_1880</name>
</gene>
<name>Y104_ENCCU</name>
<sequence length="204" mass="22950">MCKDRQHTSRPQIQHNRVKTPLAKLTSTIAKGPLHRRSTMGRHRAAYHRCYRRSSKESSAIIPCKTRTYSTVSETAWRQTNPSPNELLLSMLPPVPRRPRGGCRPLHAPLLNKMPQTFPAASERPMPSRRLSKATQNVQTRPSERPAPCHRRPGPRGPGGRDPPEACHPWSLGPELGLLAPSEVQFDCLEASRTWNTFIGAYTK</sequence>
<protein>
    <recommendedName>
        <fullName>Uncharacterized protein ECU01_0040</fullName>
    </recommendedName>
</protein>
<proteinExistence type="predicted"/>
<keyword id="KW-1185">Reference proteome</keyword>
<accession>Q8STF2</accession>
<dbReference type="EMBL" id="AL391737">
    <property type="protein sequence ID" value="CAD24876.1"/>
    <property type="molecule type" value="Genomic_DNA"/>
</dbReference>
<dbReference type="EMBL" id="AL391737">
    <property type="protein sequence ID" value="CAD25028.1"/>
    <property type="molecule type" value="Genomic_DNA"/>
</dbReference>
<dbReference type="EMBL" id="AL590444">
    <property type="protein sequence ID" value="CAD25192.1"/>
    <property type="molecule type" value="Genomic_DNA"/>
</dbReference>
<dbReference type="EMBL" id="AL590445">
    <property type="protein sequence ID" value="CAD26519.1"/>
    <property type="molecule type" value="Genomic_DNA"/>
</dbReference>
<dbReference type="EMBL" id="AL590448">
    <property type="protein sequence ID" value="CAD26515.1"/>
    <property type="molecule type" value="Genomic_DNA"/>
</dbReference>
<dbReference type="EMBL" id="AL590449">
    <property type="protein sequence ID" value="CAD25909.1"/>
    <property type="molecule type" value="Genomic_DNA"/>
</dbReference>
<dbReference type="RefSeq" id="NP_001402092.1">
    <property type="nucleotide sequence ID" value="NM_001415541.1"/>
</dbReference>
<dbReference type="RefSeq" id="NP_584688.1">
    <property type="nucleotide sequence ID" value="NM_001041038.1"/>
</dbReference>
<dbReference type="RefSeq" id="NP_586305.1">
    <property type="nucleotide sequence ID" value="NM_001042138.1"/>
</dbReference>
<dbReference type="RefSeq" id="NP_597339.1">
    <property type="nucleotide sequence ID" value="NM_001041948.1"/>
</dbReference>
<dbReference type="RefSeq" id="NP_597342.1">
    <property type="nucleotide sequence ID" value="NM_001041208.1"/>
</dbReference>
<dbReference type="RefSeq" id="XP_965841.1">
    <property type="nucleotide sequence ID" value="XM_960748.1"/>
</dbReference>
<dbReference type="RefSeq" id="XP_965993.1">
    <property type="nucleotide sequence ID" value="XM_960900.1"/>
</dbReference>
<dbReference type="GeneID" id="858836"/>
<dbReference type="GeneID" id="859006"/>
<dbReference type="GeneID" id="859761"/>
<dbReference type="GeneID" id="859956"/>
<dbReference type="GeneID" id="860177"/>
<dbReference type="KEGG" id="ecu:ECU04_0050"/>
<dbReference type="KEGG" id="ecu:ECU05_0020"/>
<dbReference type="KEGG" id="ecu:ECU08_2130"/>
<dbReference type="KEGG" id="ecu:ECU10_1880"/>
<dbReference type="VEuPathDB" id="MicrosporidiaDB:ECU01_0040"/>
<dbReference type="VEuPathDB" id="MicrosporidiaDB:ECU01_1570"/>
<dbReference type="VEuPathDB" id="MicrosporidiaDB:ECU04_0050"/>
<dbReference type="VEuPathDB" id="MicrosporidiaDB:ECU05_0020"/>
<dbReference type="VEuPathDB" id="MicrosporidiaDB:ECU08_2130"/>
<dbReference type="VEuPathDB" id="MicrosporidiaDB:ECU10_1880"/>
<dbReference type="HOGENOM" id="CLU_1343225_0_0_1"/>
<dbReference type="InParanoid" id="Q8STF2"/>
<dbReference type="OrthoDB" id="5708326at2759"/>
<dbReference type="Proteomes" id="UP000000819">
    <property type="component" value="Chromosome I"/>
</dbReference>
<dbReference type="Proteomes" id="UP000000819">
    <property type="component" value="Chromosome IV"/>
</dbReference>
<dbReference type="Proteomes" id="UP000000819">
    <property type="component" value="Chromosome V"/>
</dbReference>
<dbReference type="Proteomes" id="UP000000819">
    <property type="component" value="Chromosome VIII"/>
</dbReference>
<dbReference type="Proteomes" id="UP000000819">
    <property type="component" value="Chromosome X"/>
</dbReference>
<evidence type="ECO:0000256" key="1">
    <source>
        <dbReference type="SAM" id="MobiDB-lite"/>
    </source>
</evidence>